<keyword id="KW-0067">ATP-binding</keyword>
<keyword id="KW-0342">GTP-binding</keyword>
<keyword id="KW-0418">Kinase</keyword>
<keyword id="KW-0547">Nucleotide-binding</keyword>
<keyword id="KW-1185">Reference proteome</keyword>
<keyword id="KW-0808">Transferase</keyword>
<organism>
    <name type="scientific">Escherichia coli O6:H1 (strain CFT073 / ATCC 700928 / UPEC)</name>
    <dbReference type="NCBI Taxonomy" id="199310"/>
    <lineage>
        <taxon>Bacteria</taxon>
        <taxon>Pseudomonadati</taxon>
        <taxon>Pseudomonadota</taxon>
        <taxon>Gammaproteobacteria</taxon>
        <taxon>Enterobacterales</taxon>
        <taxon>Enterobacteriaceae</taxon>
        <taxon>Escherichia</taxon>
    </lineage>
</organism>
<proteinExistence type="inferred from homology"/>
<gene>
    <name type="primary">relA</name>
    <name type="ordered locus">c3347</name>
</gene>
<comment type="function">
    <text evidence="1">In eubacteria ppGpp (guanosine 3'-diphosphate 5'-diphosphate) is a mediator of the stringent response that coordinates a variety of cellular activities in response to changes in nutritional abundance. This enzyme catalyzes the formation of pppGpp which is then hydrolyzed to form ppGpp (By similarity).</text>
</comment>
<comment type="catalytic activity">
    <reaction>
        <text>GTP + ATP = guanosine 3'-diphosphate 5'-triphosphate + AMP</text>
        <dbReference type="Rhea" id="RHEA:22088"/>
        <dbReference type="ChEBI" id="CHEBI:30616"/>
        <dbReference type="ChEBI" id="CHEBI:37565"/>
        <dbReference type="ChEBI" id="CHEBI:142410"/>
        <dbReference type="ChEBI" id="CHEBI:456215"/>
        <dbReference type="EC" id="2.7.6.5"/>
    </reaction>
</comment>
<comment type="pathway">
    <text>Purine metabolism; ppGpp biosynthesis; ppGpp from GTP: step 1/2.</text>
</comment>
<comment type="similarity">
    <text evidence="5">Belongs to the RelA/SpoT family.</text>
</comment>
<dbReference type="EC" id="2.7.6.5"/>
<dbReference type="EMBL" id="AE014075">
    <property type="protein sequence ID" value="AAN81795.1"/>
    <property type="molecule type" value="Genomic_DNA"/>
</dbReference>
<dbReference type="RefSeq" id="WP_000226815.1">
    <property type="nucleotide sequence ID" value="NZ_CP051263.1"/>
</dbReference>
<dbReference type="SMR" id="P0AG21"/>
<dbReference type="STRING" id="199310.c3347"/>
<dbReference type="GeneID" id="93779214"/>
<dbReference type="KEGG" id="ecc:c3347"/>
<dbReference type="eggNOG" id="COG0317">
    <property type="taxonomic scope" value="Bacteria"/>
</dbReference>
<dbReference type="HOGENOM" id="CLU_012300_3_0_6"/>
<dbReference type="BioCyc" id="ECOL199310:C3347-MONOMER"/>
<dbReference type="UniPathway" id="UPA00908">
    <property type="reaction ID" value="UER00884"/>
</dbReference>
<dbReference type="Proteomes" id="UP000001410">
    <property type="component" value="Chromosome"/>
</dbReference>
<dbReference type="GO" id="GO:0005886">
    <property type="term" value="C:plasma membrane"/>
    <property type="evidence" value="ECO:0007669"/>
    <property type="project" value="TreeGrafter"/>
</dbReference>
<dbReference type="GO" id="GO:0005524">
    <property type="term" value="F:ATP binding"/>
    <property type="evidence" value="ECO:0007669"/>
    <property type="project" value="UniProtKB-KW"/>
</dbReference>
<dbReference type="GO" id="GO:0005525">
    <property type="term" value="F:GTP binding"/>
    <property type="evidence" value="ECO:0007669"/>
    <property type="project" value="UniProtKB-KW"/>
</dbReference>
<dbReference type="GO" id="GO:0008728">
    <property type="term" value="F:GTP diphosphokinase activity"/>
    <property type="evidence" value="ECO:0007669"/>
    <property type="project" value="UniProtKB-EC"/>
</dbReference>
<dbReference type="GO" id="GO:0008893">
    <property type="term" value="F:guanosine-3',5'-bis(diphosphate) 3'-diphosphatase activity"/>
    <property type="evidence" value="ECO:0007669"/>
    <property type="project" value="TreeGrafter"/>
</dbReference>
<dbReference type="GO" id="GO:0016301">
    <property type="term" value="F:kinase activity"/>
    <property type="evidence" value="ECO:0007669"/>
    <property type="project" value="UniProtKB-KW"/>
</dbReference>
<dbReference type="GO" id="GO:0015970">
    <property type="term" value="P:guanosine tetraphosphate biosynthetic process"/>
    <property type="evidence" value="ECO:0007669"/>
    <property type="project" value="UniProtKB-UniPathway"/>
</dbReference>
<dbReference type="GO" id="GO:0042594">
    <property type="term" value="P:response to starvation"/>
    <property type="evidence" value="ECO:0007669"/>
    <property type="project" value="TreeGrafter"/>
</dbReference>
<dbReference type="CDD" id="cd04876">
    <property type="entry name" value="ACT_RelA-SpoT"/>
    <property type="match status" value="1"/>
</dbReference>
<dbReference type="CDD" id="cd05399">
    <property type="entry name" value="NT_Rel-Spo_like"/>
    <property type="match status" value="1"/>
</dbReference>
<dbReference type="CDD" id="cd01668">
    <property type="entry name" value="TGS_RSH"/>
    <property type="match status" value="1"/>
</dbReference>
<dbReference type="FunFam" id="1.10.3210.10:FF:000007">
    <property type="entry name" value="GTP pyrophosphokinase"/>
    <property type="match status" value="1"/>
</dbReference>
<dbReference type="FunFam" id="3.10.20.30:FF:000002">
    <property type="entry name" value="GTP pyrophosphokinase (RelA/SpoT)"/>
    <property type="match status" value="1"/>
</dbReference>
<dbReference type="FunFam" id="3.30.460.10:FF:000001">
    <property type="entry name" value="GTP pyrophosphokinase RelA"/>
    <property type="match status" value="1"/>
</dbReference>
<dbReference type="FunFam" id="3.30.70.260:FF:000010">
    <property type="entry name" value="GTP pyrophosphokinase RelA"/>
    <property type="match status" value="1"/>
</dbReference>
<dbReference type="Gene3D" id="3.10.20.30">
    <property type="match status" value="1"/>
</dbReference>
<dbReference type="Gene3D" id="3.30.70.260">
    <property type="match status" value="1"/>
</dbReference>
<dbReference type="Gene3D" id="3.30.460.10">
    <property type="entry name" value="Beta Polymerase, domain 2"/>
    <property type="match status" value="1"/>
</dbReference>
<dbReference type="Gene3D" id="1.10.3210.10">
    <property type="entry name" value="Hypothetical protein af1432"/>
    <property type="match status" value="1"/>
</dbReference>
<dbReference type="InterPro" id="IPR045865">
    <property type="entry name" value="ACT-like_dom_sf"/>
</dbReference>
<dbReference type="InterPro" id="IPR002912">
    <property type="entry name" value="ACT_dom"/>
</dbReference>
<dbReference type="InterPro" id="IPR012675">
    <property type="entry name" value="Beta-grasp_dom_sf"/>
</dbReference>
<dbReference type="InterPro" id="IPR006674">
    <property type="entry name" value="HD_domain"/>
</dbReference>
<dbReference type="InterPro" id="IPR043519">
    <property type="entry name" value="NT_sf"/>
</dbReference>
<dbReference type="InterPro" id="IPR004811">
    <property type="entry name" value="RelA/Spo_fam"/>
</dbReference>
<dbReference type="InterPro" id="IPR045600">
    <property type="entry name" value="RelA/SpoT_AH_RIS"/>
</dbReference>
<dbReference type="InterPro" id="IPR007685">
    <property type="entry name" value="RelA_SpoT"/>
</dbReference>
<dbReference type="InterPro" id="IPR004095">
    <property type="entry name" value="TGS"/>
</dbReference>
<dbReference type="InterPro" id="IPR012676">
    <property type="entry name" value="TGS-like"/>
</dbReference>
<dbReference type="InterPro" id="IPR033655">
    <property type="entry name" value="TGS_RelA/SpoT"/>
</dbReference>
<dbReference type="NCBIfam" id="NF008124">
    <property type="entry name" value="PRK10872.1"/>
    <property type="match status" value="1"/>
</dbReference>
<dbReference type="NCBIfam" id="TIGR00691">
    <property type="entry name" value="spoT_relA"/>
    <property type="match status" value="1"/>
</dbReference>
<dbReference type="PANTHER" id="PTHR21262:SF31">
    <property type="entry name" value="GTP PYROPHOSPHOKINASE"/>
    <property type="match status" value="1"/>
</dbReference>
<dbReference type="PANTHER" id="PTHR21262">
    <property type="entry name" value="GUANOSINE-3',5'-BIS DIPHOSPHATE 3'-PYROPHOSPHOHYDROLASE"/>
    <property type="match status" value="1"/>
</dbReference>
<dbReference type="Pfam" id="PF13291">
    <property type="entry name" value="ACT_4"/>
    <property type="match status" value="1"/>
</dbReference>
<dbReference type="Pfam" id="PF13328">
    <property type="entry name" value="HD_4"/>
    <property type="match status" value="1"/>
</dbReference>
<dbReference type="Pfam" id="PF19296">
    <property type="entry name" value="RelA_AH_RIS"/>
    <property type="match status" value="1"/>
</dbReference>
<dbReference type="Pfam" id="PF04607">
    <property type="entry name" value="RelA_SpoT"/>
    <property type="match status" value="1"/>
</dbReference>
<dbReference type="Pfam" id="PF02824">
    <property type="entry name" value="TGS"/>
    <property type="match status" value="1"/>
</dbReference>
<dbReference type="SMART" id="SM00954">
    <property type="entry name" value="RelA_SpoT"/>
    <property type="match status" value="1"/>
</dbReference>
<dbReference type="SUPFAM" id="SSF55021">
    <property type="entry name" value="ACT-like"/>
    <property type="match status" value="1"/>
</dbReference>
<dbReference type="SUPFAM" id="SSF109604">
    <property type="entry name" value="HD-domain/PDEase-like"/>
    <property type="match status" value="1"/>
</dbReference>
<dbReference type="SUPFAM" id="SSF81301">
    <property type="entry name" value="Nucleotidyltransferase"/>
    <property type="match status" value="1"/>
</dbReference>
<dbReference type="SUPFAM" id="SSF81271">
    <property type="entry name" value="TGS-like"/>
    <property type="match status" value="1"/>
</dbReference>
<dbReference type="PROSITE" id="PS51671">
    <property type="entry name" value="ACT"/>
    <property type="match status" value="1"/>
</dbReference>
<dbReference type="PROSITE" id="PS51831">
    <property type="entry name" value="HD"/>
    <property type="match status" value="1"/>
</dbReference>
<dbReference type="PROSITE" id="PS51880">
    <property type="entry name" value="TGS"/>
    <property type="match status" value="1"/>
</dbReference>
<evidence type="ECO:0000250" key="1"/>
<evidence type="ECO:0000255" key="2">
    <source>
        <dbReference type="PROSITE-ProRule" id="PRU01007"/>
    </source>
</evidence>
<evidence type="ECO:0000255" key="3">
    <source>
        <dbReference type="PROSITE-ProRule" id="PRU01175"/>
    </source>
</evidence>
<evidence type="ECO:0000255" key="4">
    <source>
        <dbReference type="PROSITE-ProRule" id="PRU01228"/>
    </source>
</evidence>
<evidence type="ECO:0000305" key="5"/>
<feature type="chain" id="PRO_0000166548" description="GTP pyrophosphokinase">
    <location>
        <begin position="1"/>
        <end position="744"/>
    </location>
</feature>
<feature type="domain" description="HD" evidence="3">
    <location>
        <begin position="55"/>
        <end position="160"/>
    </location>
</feature>
<feature type="domain" description="TGS" evidence="4">
    <location>
        <begin position="404"/>
        <end position="465"/>
    </location>
</feature>
<feature type="domain" description="ACT" evidence="2">
    <location>
        <begin position="668"/>
        <end position="743"/>
    </location>
</feature>
<sequence length="744" mass="83876">MVAVRSAHINKAGEFDPEKWIASLGITSQKSCECLAETWAYCLQQTQGHPDASLLLWRGVEMVEILSTLSMDIDTLRAALLFPLADANVVSEDVLRESVGKSVVNLIHGVRDMAAIRQLKATHTDSVSSEQVDNVRRMLLAMVDDFRCVVIKLAERIAHLREVKDAPEDERVLAAKECTNIYAPLANRLGIGQLKWELEDYCFRYLHPTEYKRIAKLLHERRLDREHYIEEFVGHLRAEMKAEGVKAEVYGRPKHIYSIWRKMQKKNLAFDELFDVRAVRIVAERLQDCYAALGIVHTHYRHLPDEFDDYVANPKPNGYQSIHTVVLGPGGKTVEIQIRTKQMHEDAELGVAAHWKYKEGAAAGGARSGHEDRIAWLRKLIAWQEEMADSGEMLDEVRSQVFDDRVYVFTPKGDVVDLPAGSTPLDFAYHIHSDVGHRCIGAKIGGRIVPFTYQLQMGDQIEIITQKQPNPSRDWLNPNLGYVTTSRGRSKIHAWFRKQDRDKNILAGRQILDDELEHLGISLKEAEKHLLPRYNFNDVDELLAAIGGGDIRLNQMVNFLQSQFNKPSAEEQDAAALKQLQQKSYTPQNRSKDNGRVVVEGVGNLMHHIARCCQPIPGDEIVGFITQGRGISVHRADCEQLAELRSHAPERIVDAVWGESYSAGYSLVVRVVANDRSGLLRDITTILANEKVNVLGVASRSDTKQQLATIDMTIEIYNLQVLGRVLGKLNQVPDVIDARRLHGS</sequence>
<reference key="1">
    <citation type="journal article" date="2002" name="Proc. Natl. Acad. Sci. U.S.A.">
        <title>Extensive mosaic structure revealed by the complete genome sequence of uropathogenic Escherichia coli.</title>
        <authorList>
            <person name="Welch R.A."/>
            <person name="Burland V."/>
            <person name="Plunkett G. III"/>
            <person name="Redford P."/>
            <person name="Roesch P."/>
            <person name="Rasko D."/>
            <person name="Buckles E.L."/>
            <person name="Liou S.-R."/>
            <person name="Boutin A."/>
            <person name="Hackett J."/>
            <person name="Stroud D."/>
            <person name="Mayhew G.F."/>
            <person name="Rose D.J."/>
            <person name="Zhou S."/>
            <person name="Schwartz D.C."/>
            <person name="Perna N.T."/>
            <person name="Mobley H.L.T."/>
            <person name="Donnenberg M.S."/>
            <person name="Blattner F.R."/>
        </authorList>
    </citation>
    <scope>NUCLEOTIDE SEQUENCE [LARGE SCALE GENOMIC DNA]</scope>
    <source>
        <strain>CFT073 / ATCC 700928 / UPEC</strain>
    </source>
</reference>
<protein>
    <recommendedName>
        <fullName>GTP pyrophosphokinase</fullName>
        <ecNumber>2.7.6.5</ecNumber>
    </recommendedName>
    <alternativeName>
        <fullName>(p)ppGpp synthase</fullName>
    </alternativeName>
    <alternativeName>
        <fullName>ATP:GTP 3'-pyrophosphotransferase</fullName>
    </alternativeName>
    <alternativeName>
        <fullName>ppGpp synthase I</fullName>
    </alternativeName>
</protein>
<accession>P0AG21</accession>
<accession>P11585</accession>
<name>RELA_ECOL6</name>